<name>ILVC_PYRAE</name>
<proteinExistence type="inferred from homology"/>
<dbReference type="EC" id="1.1.1.86" evidence="1"/>
<dbReference type="EMBL" id="AE009441">
    <property type="protein sequence ID" value="AAL64821.1"/>
    <property type="molecule type" value="Genomic_DNA"/>
</dbReference>
<dbReference type="RefSeq" id="WP_011009288.1">
    <property type="nucleotide sequence ID" value="NC_003364.1"/>
</dbReference>
<dbReference type="SMR" id="Q8ZTE1"/>
<dbReference type="FunCoup" id="Q8ZTE1">
    <property type="interactions" value="163"/>
</dbReference>
<dbReference type="STRING" id="178306.PAE3298"/>
<dbReference type="EnsemblBacteria" id="AAL64821">
    <property type="protein sequence ID" value="AAL64821"/>
    <property type="gene ID" value="PAE3298"/>
</dbReference>
<dbReference type="GeneID" id="1464010"/>
<dbReference type="KEGG" id="pai:PAE3298"/>
<dbReference type="PATRIC" id="fig|178306.9.peg.2483"/>
<dbReference type="eggNOG" id="arCOG04465">
    <property type="taxonomic scope" value="Archaea"/>
</dbReference>
<dbReference type="HOGENOM" id="CLU_033821_0_1_2"/>
<dbReference type="InParanoid" id="Q8ZTE1"/>
<dbReference type="UniPathway" id="UPA00047">
    <property type="reaction ID" value="UER00056"/>
</dbReference>
<dbReference type="UniPathway" id="UPA00049">
    <property type="reaction ID" value="UER00060"/>
</dbReference>
<dbReference type="Proteomes" id="UP000002439">
    <property type="component" value="Chromosome"/>
</dbReference>
<dbReference type="GO" id="GO:0004455">
    <property type="term" value="F:ketol-acid reductoisomerase activity"/>
    <property type="evidence" value="ECO:0000318"/>
    <property type="project" value="GO_Central"/>
</dbReference>
<dbReference type="GO" id="GO:0000287">
    <property type="term" value="F:magnesium ion binding"/>
    <property type="evidence" value="ECO:0007669"/>
    <property type="project" value="UniProtKB-UniRule"/>
</dbReference>
<dbReference type="GO" id="GO:0050661">
    <property type="term" value="F:NADP binding"/>
    <property type="evidence" value="ECO:0007669"/>
    <property type="project" value="InterPro"/>
</dbReference>
<dbReference type="GO" id="GO:0009097">
    <property type="term" value="P:isoleucine biosynthetic process"/>
    <property type="evidence" value="ECO:0000318"/>
    <property type="project" value="GO_Central"/>
</dbReference>
<dbReference type="GO" id="GO:0009099">
    <property type="term" value="P:L-valine biosynthetic process"/>
    <property type="evidence" value="ECO:0000318"/>
    <property type="project" value="GO_Central"/>
</dbReference>
<dbReference type="FunFam" id="3.40.50.720:FF:000023">
    <property type="entry name" value="Ketol-acid reductoisomerase (NADP(+))"/>
    <property type="match status" value="1"/>
</dbReference>
<dbReference type="Gene3D" id="6.10.240.10">
    <property type="match status" value="1"/>
</dbReference>
<dbReference type="Gene3D" id="3.40.50.720">
    <property type="entry name" value="NAD(P)-binding Rossmann-like Domain"/>
    <property type="match status" value="1"/>
</dbReference>
<dbReference type="HAMAP" id="MF_00435">
    <property type="entry name" value="IlvC"/>
    <property type="match status" value="1"/>
</dbReference>
<dbReference type="InterPro" id="IPR008927">
    <property type="entry name" value="6-PGluconate_DH-like_C_sf"/>
</dbReference>
<dbReference type="InterPro" id="IPR013023">
    <property type="entry name" value="KARI"/>
</dbReference>
<dbReference type="InterPro" id="IPR000506">
    <property type="entry name" value="KARI_C"/>
</dbReference>
<dbReference type="InterPro" id="IPR013116">
    <property type="entry name" value="KARI_N"/>
</dbReference>
<dbReference type="InterPro" id="IPR014359">
    <property type="entry name" value="KARI_prok"/>
</dbReference>
<dbReference type="InterPro" id="IPR036291">
    <property type="entry name" value="NAD(P)-bd_dom_sf"/>
</dbReference>
<dbReference type="NCBIfam" id="TIGR00465">
    <property type="entry name" value="ilvC"/>
    <property type="match status" value="1"/>
</dbReference>
<dbReference type="NCBIfam" id="NF004017">
    <property type="entry name" value="PRK05479.1"/>
    <property type="match status" value="1"/>
</dbReference>
<dbReference type="PANTHER" id="PTHR21371">
    <property type="entry name" value="KETOL-ACID REDUCTOISOMERASE, MITOCHONDRIAL"/>
    <property type="match status" value="1"/>
</dbReference>
<dbReference type="PANTHER" id="PTHR21371:SF1">
    <property type="entry name" value="KETOL-ACID REDUCTOISOMERASE, MITOCHONDRIAL"/>
    <property type="match status" value="1"/>
</dbReference>
<dbReference type="Pfam" id="PF01450">
    <property type="entry name" value="KARI_C"/>
    <property type="match status" value="1"/>
</dbReference>
<dbReference type="Pfam" id="PF07991">
    <property type="entry name" value="KARI_N"/>
    <property type="match status" value="1"/>
</dbReference>
<dbReference type="PIRSF" id="PIRSF000116">
    <property type="entry name" value="IlvC_gammaproteo"/>
    <property type="match status" value="1"/>
</dbReference>
<dbReference type="SUPFAM" id="SSF48179">
    <property type="entry name" value="6-phosphogluconate dehydrogenase C-terminal domain-like"/>
    <property type="match status" value="1"/>
</dbReference>
<dbReference type="SUPFAM" id="SSF51735">
    <property type="entry name" value="NAD(P)-binding Rossmann-fold domains"/>
    <property type="match status" value="1"/>
</dbReference>
<dbReference type="PROSITE" id="PS51851">
    <property type="entry name" value="KARI_C"/>
    <property type="match status" value="1"/>
</dbReference>
<dbReference type="PROSITE" id="PS51850">
    <property type="entry name" value="KARI_N"/>
    <property type="match status" value="1"/>
</dbReference>
<evidence type="ECO:0000255" key="1">
    <source>
        <dbReference type="HAMAP-Rule" id="MF_00435"/>
    </source>
</evidence>
<evidence type="ECO:0000255" key="2">
    <source>
        <dbReference type="PROSITE-ProRule" id="PRU01197"/>
    </source>
</evidence>
<evidence type="ECO:0000255" key="3">
    <source>
        <dbReference type="PROSITE-ProRule" id="PRU01198"/>
    </source>
</evidence>
<comment type="function">
    <text evidence="1">Involved in the biosynthesis of branched-chain amino acids (BCAA). Catalyzes an alkyl-migration followed by a ketol-acid reduction of (S)-2-acetolactate (S2AL) to yield (R)-2,3-dihydroxy-isovalerate. In the isomerase reaction, S2AL is rearranged via a Mg-dependent methyl migration to produce 3-hydroxy-3-methyl-2-ketobutyrate (HMKB). In the reductase reaction, this 2-ketoacid undergoes a metal-dependent reduction by NADPH to yield (R)-2,3-dihydroxy-isovalerate.</text>
</comment>
<comment type="catalytic activity">
    <reaction evidence="1">
        <text>(2R)-2,3-dihydroxy-3-methylbutanoate + NADP(+) = (2S)-2-acetolactate + NADPH + H(+)</text>
        <dbReference type="Rhea" id="RHEA:22068"/>
        <dbReference type="ChEBI" id="CHEBI:15378"/>
        <dbReference type="ChEBI" id="CHEBI:49072"/>
        <dbReference type="ChEBI" id="CHEBI:57783"/>
        <dbReference type="ChEBI" id="CHEBI:58349"/>
        <dbReference type="ChEBI" id="CHEBI:58476"/>
        <dbReference type="EC" id="1.1.1.86"/>
    </reaction>
</comment>
<comment type="catalytic activity">
    <reaction evidence="1">
        <text>(2R,3R)-2,3-dihydroxy-3-methylpentanoate + NADP(+) = (S)-2-ethyl-2-hydroxy-3-oxobutanoate + NADPH + H(+)</text>
        <dbReference type="Rhea" id="RHEA:13493"/>
        <dbReference type="ChEBI" id="CHEBI:15378"/>
        <dbReference type="ChEBI" id="CHEBI:49256"/>
        <dbReference type="ChEBI" id="CHEBI:49258"/>
        <dbReference type="ChEBI" id="CHEBI:57783"/>
        <dbReference type="ChEBI" id="CHEBI:58349"/>
        <dbReference type="EC" id="1.1.1.86"/>
    </reaction>
</comment>
<comment type="cofactor">
    <cofactor evidence="1">
        <name>Mg(2+)</name>
        <dbReference type="ChEBI" id="CHEBI:18420"/>
    </cofactor>
    <text evidence="1">Binds 2 magnesium ions per subunit.</text>
</comment>
<comment type="pathway">
    <text evidence="1">Amino-acid biosynthesis; L-isoleucine biosynthesis; L-isoleucine from 2-oxobutanoate: step 2/4.</text>
</comment>
<comment type="pathway">
    <text evidence="1">Amino-acid biosynthesis; L-valine biosynthesis; L-valine from pyruvate: step 2/4.</text>
</comment>
<comment type="similarity">
    <text evidence="1">Belongs to the ketol-acid reductoisomerase family.</text>
</comment>
<gene>
    <name evidence="1" type="primary">ilvC</name>
    <name type="ordered locus">PAE3298</name>
</gene>
<sequence>MAKIYTDREASLEPLKGKTIAVIGYGIQGRAQALNLRDSGLEVIIGLRRGGKSWELATSEGFRVYEIGEAVRKADVILVLIPDMEQPKVWQEQIAPNLKEGVVVDFAHGFNVHFGLIKPPKNIDVIMVAPKAPGKAVREEYLAGRGVPALVAVYQDYSGSALKYALALAKGIGATRAGVIETTFAEETETDLIGEQIVLVGGLMELIKKGFEVLVEMGYQPEVAYFEVLNEAKLIMDLIWQRGIYGMLNGVSDTAKYGGLTVGPRVIDENVKRKMKEAAMRVKSGEFAKEWVEEYNRGAPTLRKLMEEARTHPIEKVGEEMRKLLFGP</sequence>
<accession>Q8ZTE1</accession>
<protein>
    <recommendedName>
        <fullName evidence="1">Ketol-acid reductoisomerase (NADP(+))</fullName>
        <shortName evidence="1">KARI</shortName>
        <ecNumber evidence="1">1.1.1.86</ecNumber>
    </recommendedName>
    <alternativeName>
        <fullName evidence="1">Acetohydroxy-acid isomeroreductase</fullName>
        <shortName evidence="1">AHIR</shortName>
    </alternativeName>
    <alternativeName>
        <fullName evidence="1">Alpha-keto-beta-hydroxylacyl reductoisomerase</fullName>
    </alternativeName>
    <alternativeName>
        <fullName evidence="1">Ketol-acid reductoisomerase type 1</fullName>
    </alternativeName>
    <alternativeName>
        <fullName evidence="1">Ketol-acid reductoisomerase type I</fullName>
    </alternativeName>
</protein>
<feature type="chain" id="PRO_0000151397" description="Ketol-acid reductoisomerase (NADP(+))">
    <location>
        <begin position="1"/>
        <end position="328"/>
    </location>
</feature>
<feature type="domain" description="KARI N-terminal Rossmann" evidence="2">
    <location>
        <begin position="2"/>
        <end position="182"/>
    </location>
</feature>
<feature type="domain" description="KARI C-terminal knotted" evidence="3">
    <location>
        <begin position="183"/>
        <end position="328"/>
    </location>
</feature>
<feature type="active site" evidence="1">
    <location>
        <position position="108"/>
    </location>
</feature>
<feature type="binding site" evidence="1">
    <location>
        <begin position="25"/>
        <end position="28"/>
    </location>
    <ligand>
        <name>NADP(+)</name>
        <dbReference type="ChEBI" id="CHEBI:58349"/>
    </ligand>
</feature>
<feature type="binding site" evidence="1">
    <location>
        <position position="48"/>
    </location>
    <ligand>
        <name>NADP(+)</name>
        <dbReference type="ChEBI" id="CHEBI:58349"/>
    </ligand>
</feature>
<feature type="binding site" evidence="1">
    <location>
        <position position="53"/>
    </location>
    <ligand>
        <name>NADP(+)</name>
        <dbReference type="ChEBI" id="CHEBI:58349"/>
    </ligand>
</feature>
<feature type="binding site" evidence="1">
    <location>
        <begin position="83"/>
        <end position="86"/>
    </location>
    <ligand>
        <name>NADP(+)</name>
        <dbReference type="ChEBI" id="CHEBI:58349"/>
    </ligand>
</feature>
<feature type="binding site" evidence="1">
    <location>
        <position position="134"/>
    </location>
    <ligand>
        <name>NADP(+)</name>
        <dbReference type="ChEBI" id="CHEBI:58349"/>
    </ligand>
</feature>
<feature type="binding site" evidence="1">
    <location>
        <position position="191"/>
    </location>
    <ligand>
        <name>Mg(2+)</name>
        <dbReference type="ChEBI" id="CHEBI:18420"/>
        <label>1</label>
    </ligand>
</feature>
<feature type="binding site" evidence="1">
    <location>
        <position position="191"/>
    </location>
    <ligand>
        <name>Mg(2+)</name>
        <dbReference type="ChEBI" id="CHEBI:18420"/>
        <label>2</label>
    </ligand>
</feature>
<feature type="binding site" evidence="1">
    <location>
        <position position="195"/>
    </location>
    <ligand>
        <name>Mg(2+)</name>
        <dbReference type="ChEBI" id="CHEBI:18420"/>
        <label>1</label>
    </ligand>
</feature>
<feature type="binding site" evidence="1">
    <location>
        <position position="227"/>
    </location>
    <ligand>
        <name>Mg(2+)</name>
        <dbReference type="ChEBI" id="CHEBI:18420"/>
        <label>2</label>
    </ligand>
</feature>
<feature type="binding site" evidence="1">
    <location>
        <position position="231"/>
    </location>
    <ligand>
        <name>Mg(2+)</name>
        <dbReference type="ChEBI" id="CHEBI:18420"/>
        <label>2</label>
    </ligand>
</feature>
<feature type="binding site" evidence="1">
    <location>
        <position position="252"/>
    </location>
    <ligand>
        <name>substrate</name>
    </ligand>
</feature>
<keyword id="KW-0028">Amino-acid biosynthesis</keyword>
<keyword id="KW-0100">Branched-chain amino acid biosynthesis</keyword>
<keyword id="KW-0460">Magnesium</keyword>
<keyword id="KW-0479">Metal-binding</keyword>
<keyword id="KW-0521">NADP</keyword>
<keyword id="KW-0560">Oxidoreductase</keyword>
<keyword id="KW-1185">Reference proteome</keyword>
<reference key="1">
    <citation type="journal article" date="2002" name="Proc. Natl. Acad. Sci. U.S.A.">
        <title>Genome sequence of the hyperthermophilic crenarchaeon Pyrobaculum aerophilum.</title>
        <authorList>
            <person name="Fitz-Gibbon S.T."/>
            <person name="Ladner H."/>
            <person name="Kim U.-J."/>
            <person name="Stetter K.O."/>
            <person name="Simon M.I."/>
            <person name="Miller J.H."/>
        </authorList>
    </citation>
    <scope>NUCLEOTIDE SEQUENCE [LARGE SCALE GENOMIC DNA]</scope>
    <source>
        <strain>ATCC 51768 / DSM 7523 / JCM 9630 / CIP 104966 / NBRC 100827 / IM2</strain>
    </source>
</reference>
<organism>
    <name type="scientific">Pyrobaculum aerophilum (strain ATCC 51768 / DSM 7523 / JCM 9630 / CIP 104966 / NBRC 100827 / IM2)</name>
    <dbReference type="NCBI Taxonomy" id="178306"/>
    <lineage>
        <taxon>Archaea</taxon>
        <taxon>Thermoproteota</taxon>
        <taxon>Thermoprotei</taxon>
        <taxon>Thermoproteales</taxon>
        <taxon>Thermoproteaceae</taxon>
        <taxon>Pyrobaculum</taxon>
    </lineage>
</organism>